<organism>
    <name type="scientific">Escherichia coli (strain UTI89 / UPEC)</name>
    <dbReference type="NCBI Taxonomy" id="364106"/>
    <lineage>
        <taxon>Bacteria</taxon>
        <taxon>Pseudomonadati</taxon>
        <taxon>Pseudomonadota</taxon>
        <taxon>Gammaproteobacteria</taxon>
        <taxon>Enterobacterales</taxon>
        <taxon>Enterobacteriaceae</taxon>
        <taxon>Escherichia</taxon>
    </lineage>
</organism>
<sequence>MKYDGDGRATARFFSGKGCRRAPLFTAPADAARHKRCLWSVSRVRWARDGRFYRSRLASVTVYASLSPFSDERPSSRFRGIALPSERRRLRYSTVGLTRYRTR</sequence>
<gene>
    <name type="primary">yubC</name>
    <name type="ordered locus">UTI89_P074</name>
</gene>
<proteinExistence type="predicted"/>
<feature type="chain" id="PRO_0000263041" description="Uncharacterized protein YubC">
    <location>
        <begin position="1"/>
        <end position="103"/>
    </location>
</feature>
<accession>Q1R1W4</accession>
<protein>
    <recommendedName>
        <fullName>Uncharacterized protein YubC</fullName>
    </recommendedName>
</protein>
<geneLocation type="plasmid">
    <name>pUTI89</name>
</geneLocation>
<name>YUBC_ECOUT</name>
<keyword id="KW-0614">Plasmid</keyword>
<dbReference type="EMBL" id="CP000244">
    <property type="protein sequence ID" value="ABE10650.1"/>
    <property type="molecule type" value="Genomic_DNA"/>
</dbReference>
<dbReference type="RefSeq" id="WP_001310011.1">
    <property type="nucleotide sequence ID" value="NC_007941.1"/>
</dbReference>
<dbReference type="KEGG" id="eci:UTI89_P074"/>
<dbReference type="HOGENOM" id="CLU_2259327_0_0_6"/>
<dbReference type="Proteomes" id="UP000001952">
    <property type="component" value="Plasmid pUTI89"/>
</dbReference>
<reference key="1">
    <citation type="journal article" date="2006" name="Proc. Natl. Acad. Sci. U.S.A.">
        <title>Identification of genes subject to positive selection in uropathogenic strains of Escherichia coli: a comparative genomics approach.</title>
        <authorList>
            <person name="Chen S.L."/>
            <person name="Hung C.-S."/>
            <person name="Xu J."/>
            <person name="Reigstad C.S."/>
            <person name="Magrini V."/>
            <person name="Sabo A."/>
            <person name="Blasiar D."/>
            <person name="Bieri T."/>
            <person name="Meyer R.R."/>
            <person name="Ozersky P."/>
            <person name="Armstrong J.R."/>
            <person name="Fulton R.S."/>
            <person name="Latreille J.P."/>
            <person name="Spieth J."/>
            <person name="Hooton T.M."/>
            <person name="Mardis E.R."/>
            <person name="Hultgren S.J."/>
            <person name="Gordon J.I."/>
        </authorList>
    </citation>
    <scope>NUCLEOTIDE SEQUENCE [LARGE SCALE GENOMIC DNA]</scope>
    <source>
        <strain>UTI89 / UPEC</strain>
    </source>
</reference>